<protein>
    <recommendedName>
        <fullName evidence="2">tRNA (guanine-N(7)-)-methyltransferase</fullName>
        <ecNumber evidence="2">2.1.1.33</ecNumber>
    </recommendedName>
    <alternativeName>
        <fullName evidence="2">tRNA (guanine(46)-N(7))-methyltransferase</fullName>
    </alternativeName>
    <alternativeName>
        <fullName evidence="2">tRNA(m7G46)-methyltransferase</fullName>
    </alternativeName>
</protein>
<dbReference type="EC" id="2.1.1.33" evidence="2"/>
<dbReference type="EMBL" id="CP000319">
    <property type="protein sequence ID" value="ABE60929.1"/>
    <property type="molecule type" value="Genomic_DNA"/>
</dbReference>
<dbReference type="RefSeq" id="WP_011508636.1">
    <property type="nucleotide sequence ID" value="NC_007964.1"/>
</dbReference>
<dbReference type="SMR" id="Q1QS68"/>
<dbReference type="STRING" id="323097.Nham_0027"/>
<dbReference type="KEGG" id="nha:Nham_0027"/>
<dbReference type="eggNOG" id="COG0220">
    <property type="taxonomic scope" value="Bacteria"/>
</dbReference>
<dbReference type="HOGENOM" id="CLU_050910_0_3_5"/>
<dbReference type="OrthoDB" id="9802090at2"/>
<dbReference type="UniPathway" id="UPA00989"/>
<dbReference type="Proteomes" id="UP000001953">
    <property type="component" value="Chromosome"/>
</dbReference>
<dbReference type="GO" id="GO:0043527">
    <property type="term" value="C:tRNA methyltransferase complex"/>
    <property type="evidence" value="ECO:0007669"/>
    <property type="project" value="TreeGrafter"/>
</dbReference>
<dbReference type="GO" id="GO:0008176">
    <property type="term" value="F:tRNA (guanine(46)-N7)-methyltransferase activity"/>
    <property type="evidence" value="ECO:0007669"/>
    <property type="project" value="UniProtKB-UniRule"/>
</dbReference>
<dbReference type="Gene3D" id="3.40.50.150">
    <property type="entry name" value="Vaccinia Virus protein VP39"/>
    <property type="match status" value="1"/>
</dbReference>
<dbReference type="HAMAP" id="MF_01057">
    <property type="entry name" value="tRNA_methyltr_TrmB"/>
    <property type="match status" value="1"/>
</dbReference>
<dbReference type="InterPro" id="IPR029063">
    <property type="entry name" value="SAM-dependent_MTases_sf"/>
</dbReference>
<dbReference type="InterPro" id="IPR003358">
    <property type="entry name" value="tRNA_(Gua-N-7)_MeTrfase_Trmb"/>
</dbReference>
<dbReference type="InterPro" id="IPR055361">
    <property type="entry name" value="tRNA_methyltr_TrmB_bact"/>
</dbReference>
<dbReference type="NCBIfam" id="TIGR00091">
    <property type="entry name" value="tRNA (guanosine(46)-N7)-methyltransferase TrmB"/>
    <property type="match status" value="1"/>
</dbReference>
<dbReference type="PANTHER" id="PTHR23417">
    <property type="entry name" value="3-DEOXY-D-MANNO-OCTULOSONIC-ACID TRANSFERASE/TRNA GUANINE-N 7 - -METHYLTRANSFERASE"/>
    <property type="match status" value="1"/>
</dbReference>
<dbReference type="PANTHER" id="PTHR23417:SF14">
    <property type="entry name" value="PENTACOTRIPEPTIDE-REPEAT REGION OF PRORP DOMAIN-CONTAINING PROTEIN"/>
    <property type="match status" value="1"/>
</dbReference>
<dbReference type="Pfam" id="PF02390">
    <property type="entry name" value="Methyltransf_4"/>
    <property type="match status" value="1"/>
</dbReference>
<dbReference type="SUPFAM" id="SSF53335">
    <property type="entry name" value="S-adenosyl-L-methionine-dependent methyltransferases"/>
    <property type="match status" value="1"/>
</dbReference>
<dbReference type="PROSITE" id="PS51625">
    <property type="entry name" value="SAM_MT_TRMB"/>
    <property type="match status" value="1"/>
</dbReference>
<proteinExistence type="inferred from homology"/>
<reference key="1">
    <citation type="submission" date="2006-03" db="EMBL/GenBank/DDBJ databases">
        <title>Complete sequence of chromosome of Nitrobacter hamburgensis X14.</title>
        <authorList>
            <consortium name="US DOE Joint Genome Institute"/>
            <person name="Copeland A."/>
            <person name="Lucas S."/>
            <person name="Lapidus A."/>
            <person name="Barry K."/>
            <person name="Detter J.C."/>
            <person name="Glavina del Rio T."/>
            <person name="Hammon N."/>
            <person name="Israni S."/>
            <person name="Dalin E."/>
            <person name="Tice H."/>
            <person name="Pitluck S."/>
            <person name="Chain P."/>
            <person name="Malfatti S."/>
            <person name="Shin M."/>
            <person name="Vergez L."/>
            <person name="Schmutz J."/>
            <person name="Larimer F."/>
            <person name="Land M."/>
            <person name="Hauser L."/>
            <person name="Kyrpides N."/>
            <person name="Ivanova N."/>
            <person name="Ward B."/>
            <person name="Arp D."/>
            <person name="Klotz M."/>
            <person name="Stein L."/>
            <person name="O'Mullan G."/>
            <person name="Starkenburg S."/>
            <person name="Sayavedra L."/>
            <person name="Poret-Peterson A.T."/>
            <person name="Gentry M.E."/>
            <person name="Bruce D."/>
            <person name="Richardson P."/>
        </authorList>
    </citation>
    <scope>NUCLEOTIDE SEQUENCE [LARGE SCALE GENOMIC DNA]</scope>
    <source>
        <strain>DSM 10229 / NCIMB 13809 / X14</strain>
    </source>
</reference>
<comment type="function">
    <text evidence="2">Catalyzes the formation of N(7)-methylguanine at position 46 (m7G46) in tRNA.</text>
</comment>
<comment type="catalytic activity">
    <reaction evidence="2">
        <text>guanosine(46) in tRNA + S-adenosyl-L-methionine = N(7)-methylguanosine(46) in tRNA + S-adenosyl-L-homocysteine</text>
        <dbReference type="Rhea" id="RHEA:42708"/>
        <dbReference type="Rhea" id="RHEA-COMP:10188"/>
        <dbReference type="Rhea" id="RHEA-COMP:10189"/>
        <dbReference type="ChEBI" id="CHEBI:57856"/>
        <dbReference type="ChEBI" id="CHEBI:59789"/>
        <dbReference type="ChEBI" id="CHEBI:74269"/>
        <dbReference type="ChEBI" id="CHEBI:74480"/>
        <dbReference type="EC" id="2.1.1.33"/>
    </reaction>
</comment>
<comment type="pathway">
    <text evidence="2">tRNA modification; N(7)-methylguanine-tRNA biosynthesis.</text>
</comment>
<comment type="similarity">
    <text evidence="2">Belongs to the class I-like SAM-binding methyltransferase superfamily. TrmB family.</text>
</comment>
<evidence type="ECO:0000250" key="1"/>
<evidence type="ECO:0000255" key="2">
    <source>
        <dbReference type="HAMAP-Rule" id="MF_01057"/>
    </source>
</evidence>
<evidence type="ECO:0000256" key="3">
    <source>
        <dbReference type="SAM" id="MobiDB-lite"/>
    </source>
</evidence>
<sequence length="255" mass="28542">MTAAASDPHNPRSSADDTASPRCESGQGSFFGRRKGHKLRPHQNGLIEHLLPRLSLDPGASGPSDPATLFGRPVKEMRIEIGFGGGEHLVAEALAFPRTGFIGCEPYVNGMAKILSQIEAHDIGNIRLLAGDASELLAWLPRASLARIDLIHPDPWPKRRHWKRRFVQDATVAEMARVLRPGGEFRFVSDIADYCAWTLSHLARSPGFLWLAERATDWHNPWPDYTMTRYGRKAEREGRRAAYLRFRRESDAAQA</sequence>
<gene>
    <name evidence="2" type="primary">trmB</name>
    <name type="ordered locus">Nham_0027</name>
</gene>
<organism>
    <name type="scientific">Nitrobacter hamburgensis (strain DSM 10229 / NCIMB 13809 / X14)</name>
    <dbReference type="NCBI Taxonomy" id="323097"/>
    <lineage>
        <taxon>Bacteria</taxon>
        <taxon>Pseudomonadati</taxon>
        <taxon>Pseudomonadota</taxon>
        <taxon>Alphaproteobacteria</taxon>
        <taxon>Hyphomicrobiales</taxon>
        <taxon>Nitrobacteraceae</taxon>
        <taxon>Nitrobacter</taxon>
    </lineage>
</organism>
<accession>Q1QS68</accession>
<feature type="chain" id="PRO_0000288189" description="tRNA (guanine-N(7)-)-methyltransferase">
    <location>
        <begin position="1"/>
        <end position="255"/>
    </location>
</feature>
<feature type="region of interest" description="Disordered" evidence="3">
    <location>
        <begin position="1"/>
        <end position="37"/>
    </location>
</feature>
<feature type="active site" evidence="1">
    <location>
        <position position="154"/>
    </location>
</feature>
<feature type="binding site" evidence="2">
    <location>
        <position position="80"/>
    </location>
    <ligand>
        <name>S-adenosyl-L-methionine</name>
        <dbReference type="ChEBI" id="CHEBI:59789"/>
    </ligand>
</feature>
<feature type="binding site" evidence="2">
    <location>
        <position position="105"/>
    </location>
    <ligand>
        <name>S-adenosyl-L-methionine</name>
        <dbReference type="ChEBI" id="CHEBI:59789"/>
    </ligand>
</feature>
<feature type="binding site" evidence="2">
    <location>
        <position position="132"/>
    </location>
    <ligand>
        <name>S-adenosyl-L-methionine</name>
        <dbReference type="ChEBI" id="CHEBI:59789"/>
    </ligand>
</feature>
<feature type="binding site" evidence="2">
    <location>
        <position position="154"/>
    </location>
    <ligand>
        <name>S-adenosyl-L-methionine</name>
        <dbReference type="ChEBI" id="CHEBI:59789"/>
    </ligand>
</feature>
<feature type="binding site" evidence="2">
    <location>
        <position position="158"/>
    </location>
    <ligand>
        <name>substrate</name>
    </ligand>
</feature>
<feature type="binding site" evidence="2">
    <location>
        <position position="190"/>
    </location>
    <ligand>
        <name>substrate</name>
    </ligand>
</feature>
<keyword id="KW-0489">Methyltransferase</keyword>
<keyword id="KW-1185">Reference proteome</keyword>
<keyword id="KW-0949">S-adenosyl-L-methionine</keyword>
<keyword id="KW-0808">Transferase</keyword>
<keyword id="KW-0819">tRNA processing</keyword>
<name>TRMB_NITHX</name>